<evidence type="ECO:0000250" key="1">
    <source>
        <dbReference type="UniProtKB" id="Q70CQ2"/>
    </source>
</evidence>
<evidence type="ECO:0000255" key="2">
    <source>
        <dbReference type="PROSITE-ProRule" id="PRU01035"/>
    </source>
</evidence>
<evidence type="ECO:0000256" key="3">
    <source>
        <dbReference type="SAM" id="MobiDB-lite"/>
    </source>
</evidence>
<evidence type="ECO:0000269" key="4">
    <source>
    </source>
</evidence>
<evidence type="ECO:0000269" key="5">
    <source>
    </source>
</evidence>
<evidence type="ECO:0000269" key="6">
    <source>
    </source>
</evidence>
<evidence type="ECO:0000303" key="7">
    <source>
    </source>
</evidence>
<evidence type="ECO:0000303" key="8">
    <source>
    </source>
</evidence>
<evidence type="ECO:0000305" key="9"/>
<evidence type="ECO:0000305" key="10">
    <source>
    </source>
</evidence>
<evidence type="ECO:0000312" key="11">
    <source>
        <dbReference type="FlyBase" id="FBgn0039214"/>
    </source>
</evidence>
<evidence type="ECO:0000312" key="12">
    <source>
        <dbReference type="Proteomes" id="UP000000803"/>
    </source>
</evidence>
<name>PUF_DROME</name>
<gene>
    <name evidence="7 11" type="primary">puf</name>
    <name evidence="8" type="synonym">Usp34</name>
    <name evidence="11" type="ORF">CG5794</name>
</gene>
<dbReference type="EC" id="3.4.19.12" evidence="1"/>
<dbReference type="EMBL" id="AE014297">
    <property type="protein sequence ID" value="AAF56319.2"/>
    <property type="molecule type" value="Genomic_DNA"/>
</dbReference>
<dbReference type="EMBL" id="AE014297">
    <property type="protein sequence ID" value="AAS65209.1"/>
    <property type="molecule type" value="Genomic_DNA"/>
</dbReference>
<dbReference type="RefSeq" id="NP_651275.1">
    <molecule id="Q9VC56-1"/>
    <property type="nucleotide sequence ID" value="NM_143018.4"/>
</dbReference>
<dbReference type="RefSeq" id="NP_996287.1">
    <molecule id="Q9VC56-2"/>
    <property type="nucleotide sequence ID" value="NM_206564.2"/>
</dbReference>
<dbReference type="SMR" id="Q9VC56"/>
<dbReference type="FunCoup" id="Q9VC56">
    <property type="interactions" value="2493"/>
</dbReference>
<dbReference type="IntAct" id="Q9VC56">
    <property type="interactions" value="5"/>
</dbReference>
<dbReference type="STRING" id="7227.FBpp0303341"/>
<dbReference type="MEROPS" id="C19.A46"/>
<dbReference type="GlyGen" id="Q9VC56">
    <property type="glycosylation" value="5 sites"/>
</dbReference>
<dbReference type="PaxDb" id="7227-FBpp0303340"/>
<dbReference type="EnsemblMetazoa" id="FBtr0084667">
    <molecule id="Q9VC56-2"/>
    <property type="protein sequence ID" value="FBpp0084047"/>
    <property type="gene ID" value="FBgn0039214"/>
</dbReference>
<dbReference type="EnsemblMetazoa" id="FBtr0084668">
    <molecule id="Q9VC56-1"/>
    <property type="protein sequence ID" value="FBpp0084048"/>
    <property type="gene ID" value="FBgn0039214"/>
</dbReference>
<dbReference type="GeneID" id="42935"/>
<dbReference type="KEGG" id="dme:Dmel_CG5794"/>
<dbReference type="UCSC" id="CG5794-RB">
    <property type="organism name" value="d. melanogaster"/>
</dbReference>
<dbReference type="AGR" id="FB:FBgn0039214"/>
<dbReference type="CTD" id="42935"/>
<dbReference type="FlyBase" id="FBgn0039214">
    <property type="gene designation" value="puf"/>
</dbReference>
<dbReference type="VEuPathDB" id="VectorBase:FBgn0039214"/>
<dbReference type="eggNOG" id="KOG1866">
    <property type="taxonomic scope" value="Eukaryota"/>
</dbReference>
<dbReference type="HOGENOM" id="CLU_000109_0_0_1"/>
<dbReference type="InParanoid" id="Q9VC56"/>
<dbReference type="OMA" id="FVAQCMN"/>
<dbReference type="OrthoDB" id="289038at2759"/>
<dbReference type="PhylomeDB" id="Q9VC56"/>
<dbReference type="SignaLink" id="Q9VC56"/>
<dbReference type="BioGRID-ORCS" id="42935">
    <property type="hits" value="0 hits in 1 CRISPR screen"/>
</dbReference>
<dbReference type="GenomeRNAi" id="42935"/>
<dbReference type="PRO" id="PR:Q9VC56"/>
<dbReference type="Proteomes" id="UP000000803">
    <property type="component" value="Chromosome 3R"/>
</dbReference>
<dbReference type="Bgee" id="FBgn0039214">
    <property type="expression patterns" value="Expressed in intestinal stem cell (Drosophila) in digestive tract and 202 other cell types or tissues"/>
</dbReference>
<dbReference type="ExpressionAtlas" id="Q9VC56">
    <property type="expression patterns" value="baseline and differential"/>
</dbReference>
<dbReference type="GO" id="GO:0005829">
    <property type="term" value="C:cytosol"/>
    <property type="evidence" value="ECO:0000318"/>
    <property type="project" value="GO_Central"/>
</dbReference>
<dbReference type="GO" id="GO:0005634">
    <property type="term" value="C:nucleus"/>
    <property type="evidence" value="ECO:0000314"/>
    <property type="project" value="FlyBase"/>
</dbReference>
<dbReference type="GO" id="GO:0004843">
    <property type="term" value="F:cysteine-type deubiquitinase activity"/>
    <property type="evidence" value="ECO:0000250"/>
    <property type="project" value="FlyBase"/>
</dbReference>
<dbReference type="GO" id="GO:0002785">
    <property type="term" value="P:negative regulation of antimicrobial peptide production"/>
    <property type="evidence" value="ECO:0000315"/>
    <property type="project" value="FlyBase"/>
</dbReference>
<dbReference type="GO" id="GO:0045824">
    <property type="term" value="P:negative regulation of innate immune response"/>
    <property type="evidence" value="ECO:0000315"/>
    <property type="project" value="FlyBase"/>
</dbReference>
<dbReference type="GO" id="GO:0061060">
    <property type="term" value="P:negative regulation of peptidoglycan recognition protein signaling pathway"/>
    <property type="evidence" value="ECO:0000315"/>
    <property type="project" value="FlyBase"/>
</dbReference>
<dbReference type="GO" id="GO:0045751">
    <property type="term" value="P:negative regulation of Toll signaling pathway"/>
    <property type="evidence" value="ECO:0000315"/>
    <property type="project" value="FlyBase"/>
</dbReference>
<dbReference type="GO" id="GO:0030307">
    <property type="term" value="P:positive regulation of cell growth"/>
    <property type="evidence" value="ECO:0000315"/>
    <property type="project" value="FlyBase"/>
</dbReference>
<dbReference type="GO" id="GO:1905168">
    <property type="term" value="P:positive regulation of double-strand break repair via homologous recombination"/>
    <property type="evidence" value="ECO:0000315"/>
    <property type="project" value="FlyBase"/>
</dbReference>
<dbReference type="GO" id="GO:0043687">
    <property type="term" value="P:post-translational protein modification"/>
    <property type="evidence" value="ECO:0000315"/>
    <property type="project" value="FlyBase"/>
</dbReference>
<dbReference type="GO" id="GO:0016579">
    <property type="term" value="P:protein deubiquitination"/>
    <property type="evidence" value="ECO:0007669"/>
    <property type="project" value="InterPro"/>
</dbReference>
<dbReference type="GO" id="GO:0006508">
    <property type="term" value="P:proteolysis"/>
    <property type="evidence" value="ECO:0007669"/>
    <property type="project" value="UniProtKB-KW"/>
</dbReference>
<dbReference type="GO" id="GO:0031647">
    <property type="term" value="P:regulation of protein stability"/>
    <property type="evidence" value="ECO:0000315"/>
    <property type="project" value="FlyBase"/>
</dbReference>
<dbReference type="GO" id="GO:0035220">
    <property type="term" value="P:wing disc development"/>
    <property type="evidence" value="ECO:0000315"/>
    <property type="project" value="FlyBase"/>
</dbReference>
<dbReference type="CDD" id="cd02659">
    <property type="entry name" value="peptidase_C19C"/>
    <property type="match status" value="1"/>
</dbReference>
<dbReference type="FunFam" id="3.90.70.10:FF:000014">
    <property type="entry name" value="Ubiquitin carboxyl-terminal hydrolase 34"/>
    <property type="match status" value="1"/>
</dbReference>
<dbReference type="Gene3D" id="3.90.70.10">
    <property type="entry name" value="Cysteine proteinases"/>
    <property type="match status" value="1"/>
</dbReference>
<dbReference type="InterPro" id="IPR016024">
    <property type="entry name" value="ARM-type_fold"/>
</dbReference>
<dbReference type="InterPro" id="IPR056850">
    <property type="entry name" value="ARM_UBP34_24_USP9X_Y"/>
</dbReference>
<dbReference type="InterPro" id="IPR021905">
    <property type="entry name" value="DUF3517"/>
</dbReference>
<dbReference type="InterPro" id="IPR038765">
    <property type="entry name" value="Papain-like_cys_pep_sf"/>
</dbReference>
<dbReference type="InterPro" id="IPR050164">
    <property type="entry name" value="Peptidase_C19"/>
</dbReference>
<dbReference type="InterPro" id="IPR001394">
    <property type="entry name" value="Peptidase_C19_UCH"/>
</dbReference>
<dbReference type="InterPro" id="IPR018200">
    <property type="entry name" value="USP_CS"/>
</dbReference>
<dbReference type="InterPro" id="IPR028889">
    <property type="entry name" value="USP_dom"/>
</dbReference>
<dbReference type="PANTHER" id="PTHR24006">
    <property type="entry name" value="UBIQUITIN CARBOXYL-TERMINAL HYDROLASE"/>
    <property type="match status" value="1"/>
</dbReference>
<dbReference type="PANTHER" id="PTHR24006:SF943">
    <property type="entry name" value="UBIQUITIN CARBOXYL-TERMINAL HYDROLASE PUF"/>
    <property type="match status" value="1"/>
</dbReference>
<dbReference type="Pfam" id="PF25010">
    <property type="entry name" value="ARM_UBP24_USP9X-Y"/>
    <property type="match status" value="2"/>
</dbReference>
<dbReference type="Pfam" id="PF12030">
    <property type="entry name" value="DUF3517"/>
    <property type="match status" value="1"/>
</dbReference>
<dbReference type="Pfam" id="PF00443">
    <property type="entry name" value="UCH"/>
    <property type="match status" value="1"/>
</dbReference>
<dbReference type="SUPFAM" id="SSF48371">
    <property type="entry name" value="ARM repeat"/>
    <property type="match status" value="1"/>
</dbReference>
<dbReference type="SUPFAM" id="SSF54001">
    <property type="entry name" value="Cysteine proteinases"/>
    <property type="match status" value="1"/>
</dbReference>
<dbReference type="PROSITE" id="PS00972">
    <property type="entry name" value="USP_1"/>
    <property type="match status" value="1"/>
</dbReference>
<dbReference type="PROSITE" id="PS00973">
    <property type="entry name" value="USP_2"/>
    <property type="match status" value="1"/>
</dbReference>
<dbReference type="PROSITE" id="PS50235">
    <property type="entry name" value="USP_3"/>
    <property type="match status" value="1"/>
</dbReference>
<feature type="chain" id="PRO_0000441820" description="Ubiquitin carboxyl-terminal hydrolase puf">
    <location>
        <begin position="1"/>
        <end position="3912"/>
    </location>
</feature>
<feature type="domain" description="USP" evidence="2">
    <location>
        <begin position="2015"/>
        <end position="2380"/>
    </location>
</feature>
<feature type="region of interest" description="Disordered" evidence="3">
    <location>
        <begin position="101"/>
        <end position="172"/>
    </location>
</feature>
<feature type="region of interest" description="Disordered" evidence="3">
    <location>
        <begin position="518"/>
        <end position="590"/>
    </location>
</feature>
<feature type="region of interest" description="Disordered" evidence="3">
    <location>
        <begin position="660"/>
        <end position="688"/>
    </location>
</feature>
<feature type="region of interest" description="Disordered" evidence="3">
    <location>
        <begin position="851"/>
        <end position="878"/>
    </location>
</feature>
<feature type="region of interest" description="Disordered" evidence="3">
    <location>
        <begin position="1491"/>
        <end position="1611"/>
    </location>
</feature>
<feature type="region of interest" description="Disordered" evidence="3">
    <location>
        <begin position="2249"/>
        <end position="2274"/>
    </location>
</feature>
<feature type="region of interest" description="Disordered" evidence="3">
    <location>
        <begin position="2391"/>
        <end position="2529"/>
    </location>
</feature>
<feature type="region of interest" description="Disordered" evidence="3">
    <location>
        <begin position="3322"/>
        <end position="3344"/>
    </location>
</feature>
<feature type="region of interest" description="Disordered" evidence="3">
    <location>
        <begin position="3657"/>
        <end position="3776"/>
    </location>
</feature>
<feature type="region of interest" description="Disordered" evidence="3">
    <location>
        <begin position="3800"/>
        <end position="3912"/>
    </location>
</feature>
<feature type="compositionally biased region" description="Basic and acidic residues" evidence="3">
    <location>
        <begin position="106"/>
        <end position="133"/>
    </location>
</feature>
<feature type="compositionally biased region" description="Low complexity" evidence="3">
    <location>
        <begin position="134"/>
        <end position="143"/>
    </location>
</feature>
<feature type="compositionally biased region" description="Pro residues" evidence="3">
    <location>
        <begin position="150"/>
        <end position="164"/>
    </location>
</feature>
<feature type="compositionally biased region" description="Low complexity" evidence="3">
    <location>
        <begin position="522"/>
        <end position="532"/>
    </location>
</feature>
<feature type="compositionally biased region" description="Basic and acidic residues" evidence="3">
    <location>
        <begin position="576"/>
        <end position="585"/>
    </location>
</feature>
<feature type="compositionally biased region" description="Acidic residues" evidence="3">
    <location>
        <begin position="660"/>
        <end position="687"/>
    </location>
</feature>
<feature type="compositionally biased region" description="Polar residues" evidence="3">
    <location>
        <begin position="862"/>
        <end position="876"/>
    </location>
</feature>
<feature type="compositionally biased region" description="Basic residues" evidence="3">
    <location>
        <begin position="1511"/>
        <end position="1520"/>
    </location>
</feature>
<feature type="compositionally biased region" description="Polar residues" evidence="3">
    <location>
        <begin position="1550"/>
        <end position="1567"/>
    </location>
</feature>
<feature type="compositionally biased region" description="Basic and acidic residues" evidence="3">
    <location>
        <begin position="1583"/>
        <end position="1594"/>
    </location>
</feature>
<feature type="compositionally biased region" description="Pro residues" evidence="3">
    <location>
        <begin position="1600"/>
        <end position="1609"/>
    </location>
</feature>
<feature type="compositionally biased region" description="Basic and acidic residues" evidence="3">
    <location>
        <begin position="2249"/>
        <end position="2263"/>
    </location>
</feature>
<feature type="compositionally biased region" description="Basic and acidic residues" evidence="3">
    <location>
        <begin position="2402"/>
        <end position="2413"/>
    </location>
</feature>
<feature type="compositionally biased region" description="Basic and acidic residues" evidence="3">
    <location>
        <begin position="2433"/>
        <end position="2488"/>
    </location>
</feature>
<feature type="compositionally biased region" description="Low complexity" evidence="3">
    <location>
        <begin position="2504"/>
        <end position="2523"/>
    </location>
</feature>
<feature type="compositionally biased region" description="Basic and acidic residues" evidence="3">
    <location>
        <begin position="3657"/>
        <end position="3703"/>
    </location>
</feature>
<feature type="compositionally biased region" description="Polar residues" evidence="3">
    <location>
        <begin position="3706"/>
        <end position="3721"/>
    </location>
</feature>
<feature type="compositionally biased region" description="Acidic residues" evidence="3">
    <location>
        <begin position="3741"/>
        <end position="3751"/>
    </location>
</feature>
<feature type="compositionally biased region" description="Basic and acidic residues" evidence="3">
    <location>
        <begin position="3766"/>
        <end position="3776"/>
    </location>
</feature>
<feature type="compositionally biased region" description="Polar residues" evidence="3">
    <location>
        <begin position="3865"/>
        <end position="3877"/>
    </location>
</feature>
<feature type="compositionally biased region" description="Low complexity" evidence="3">
    <location>
        <begin position="3878"/>
        <end position="3912"/>
    </location>
</feature>
<feature type="active site" description="Nucleophile" evidence="2 10">
    <location>
        <position position="2024"/>
    </location>
</feature>
<feature type="active site" description="Proton acceptor" evidence="2 10">
    <location>
        <position position="2305"/>
    </location>
</feature>
<feature type="splice variant" id="VSP_059118" description="In isoform 2.">
    <original>GFPFLYQQI</original>
    <variation>VILKKLESF</variation>
    <location>
        <begin position="2824"/>
        <end position="2832"/>
    </location>
</feature>
<feature type="splice variant" id="VSP_059119" description="In isoform 2.">
    <location>
        <begin position="2833"/>
        <end position="3912"/>
    </location>
</feature>
<feature type="mutagenesis site" description="Loss of activity in Myc-mediated growth in the wing and eye, and no increase in the expression of CycE in the wing imaginal disk when overexpressed. Unable to increase expression of Myc and ago in the wing imaginal disk when overexpressed; when associated with A-2305 and A-2328." evidence="4">
    <original>C</original>
    <variation>A</variation>
    <location>
        <position position="2024"/>
    </location>
</feature>
<feature type="mutagenesis site" description="Loss of activity in Myc-mediated growth in the wing and eye, and unable to increase expression of Myc and ago in the wing imaginal disk when overexpressed; when associated with A-2024 and A-2328." evidence="4">
    <original>H</original>
    <variation>A</variation>
    <location>
        <position position="2305"/>
    </location>
</feature>
<feature type="mutagenesis site" description="Loss of activity in Myc-mediated growth in the wing and eye, and unable to increase expression of Myc and ago in the wing imaginal disk when overexpressed; when associated with A-2024 and A-2305." evidence="4">
    <original>N</original>
    <variation>A</variation>
    <location>
        <position position="2328"/>
    </location>
</feature>
<sequence length="3912" mass="440375">MCEVCADFQNLLELYEVRVASSDLKFQLLLKSEIETTFNYIQSWPQRQCMCLYRDTKNYDRFNLVVQSLICLTVQHLKHIDHLIDNYKRLTASAAQVVAQAQQQREQQRDEASAQAEAKESSAPAEEPKKEEPSGSAGEEAQGSGDGPAKKPPVGPCTPPPPQTANPQHKSHLQYTEEPWILPEVEKLLVLVSKVFLLNFPLYIAHKHGMHSRLDDLQAEEAHHLALICDLHDNDLPIYLLRNVSLFCNSGGFGAMSLCFEHPDLPVSTAHSMTAAVSNVKLWLNYHCNTQLFVPLRSRILQYMCKLSDQSLRSAATRAMADFVWSSMRDPLDVAVNFDTEGLALAFKYFTSTTLTMRLAGMAQINAHINLFNEICTTETVNEVELFGQRIANWLTENHIVQHLFGPNLHVEIVKQAHVLLNFLAVENQISEEDIKLIWQATQLKHCSKTIFDILPSLVKNLTPRPAMHLYSLLCRMDPKEHTEQSIYIASALTKQLWTRDTSRSQMNLMQDHLLGSNVTASSSDSGSIEGSNTEDDHVGADDSSIASGGGGGGVGNKSPIDGVTPCKQARHRRHICDPTTEKGKQISPEDMAKVDLVNKRIVNIIDNTSSEEELQSRAALELQLHRSRKKTSNKRRRQKTNKQIILPHELVEIWDGVEDVPSSDEADGEADGDGEGELLADSDECSDGATSQLVPDAVLKHLQGEGPFIRAIETNINELLSGAENDGSYSSPMSNKSEKNLADFDDEDVSPCEEELAQLVSSRANCSDVPPAFAAAAAAMMVAQSAMALQKSGESNVAAAAAAVAAAAAATGTAQQTLVAMNRQASVAAAAAVVAAAKAKSDSDVDLMDVVSGGKQHHSPKASQGSSTSGSTPVQPSFKLNDVCQPGNTLLWDLLQDDKIGQLGESLALEAEKALATLLCFSMDRQLRTKFIEGCLYNVANNRSVIVSLRLLPKLFASFQQFRPSDTHSMTMWAERNHRMMQCFFNNIRHYARRHAEVLITQNGEQQQQQLGGQLYSHKTQVSVRLQFLSSIFSTVGSPKSFRLTLEQLDALWEWLAHDPECADCYFSWLQAQAKGGDQHALGIEALQHLYLKKLPELRPEEFSMVALGLFQQLCSFARIAMAEYDNHSDQISASASAVGMYHLWKIALRAQSNDVSLAAIQYINMYYMGQQLRLEKEFVSQCMENLVQAATALESIDDENALMRVQRGLLLLNTHLDTFRRRYAFHLRRWAIEGKGIGSHSNLKNEGAGPPLRIVLQQAGLSEKSLLQMHACDLIADLKAEVSKWWESLQTGLAAPVLGLLLSDGPLRIITQGQELTSDYDERSLGDAGFKDNQIVYVSLGGRGARRKESNLEHPSMLPPPPKECLPTVLLLQPKYFEKLFCLMQTLGDMQPQASTVNPQHHTKAQLLSRRVWDILAMLPTNPHILDAFKSLVTDLSELEQLDAGGEEEQLATKRKQIKQKFRDLLDPNNLQKFMYSLHIVESLALTSSRRGESNGNVAMGNTPEQVRVKKSSMGRRRNSNEQPPPPPPEVKMSKEQLCELEAPLTPTPSTGLQDVETEASSSSGGDKENQPKQHSKRQKKGETFEQEKERPVGCSTPPSPTPPPPALSVVERGDNKWSEAFVKCGGLRHLYEIFSEGQLQQSAHPKELALNEWRHDCLASLLRILWLLGFEELQSADAHVLMSRPHPFMLQLMEVPQCLTRLSSILNDEVHQQHQASSANPLVFPYQFQHLRTGFWGRAQLIQFAMNILVSFVHASAEARRLLWAPTGTDHCRWLQKFILEDPEPAVRREICAGLYRICLGNAHSYRLLLAPLLHKLIALLPLAEQMSSGNQHTQFLLSEEGKDPYGPACRDYFWLLARLVDTLSPEMVAEEHIDIEMLCESISQSILTREYYELRHGYQDDGLVGLLNLMSNLIKYDTTFKYTPKALSFIEQLIGFLFDMPSPADRQKPKCKSASSRASAYDLLVELCRGCATNYAYLHGRLLAQHKSGPKQPYPWDYWPRDEGRAECGYVGLTNLGATCYMASCVQHLYMMPQARAAVLRVPPNAARKHGPTLLELQRMFAYLLESERKSYNPRSFCRVYQMDHQPLNTGEQKDMAEFFIDLVSKLEDMTPDLKHLVKRLFCGSLSNNVVSLDCGHVSRTAEDFYTVRCQVADMRNLQESLDEVTVKDTLEGDNMYTCSQCGKKVRAEKRACFKKLPQILCFNTMRYTFNMVTMLKEKVNTHFSFPLRLNMCHYVEKTLMPQQYKEERERRQKEKEGADGSGDGNDNEKAEATLDDDIEECYEYELVGVTVHTGTADGGHYYSFIKERTKTSYHTHERWFLFNDAEVKPFDPSQIAAECFGGEMTSKTYDSVTEKYLDFSFEKTNSAYMLFYERRLPEHLQRRHSELLVTPTPSPTVEEKSEAEEPTKMETSSSEIKADVDVEVEVEEKDKEKPAQTDTESKETPAKEEIADDKSKQDEPEEKKIEKQSREGEEKSETDEKPTEMTTVSTEEEKQPTANCDNHQQNNNSNSKASNDQQPSTSKAAQKLQLFRPLLNKELEDWIWQDNRQFLQDRNIFEHTYFNFMWQICGHIPQSLISETDVTCMAAKLSVSFFIETFIHAKEKPTMVPWVELLTKQFNASQEACEWFLSHMSQEPYWPVQVLIQCPNQMVRQMFQRLVIHVIQQLRASHAHLYLEVETDEDDKELIGQASCVTRFIGSLISLLEHGARANLRHLSEYFGLLCEFSRMGDEEAMYLLRIGVLKSLVDFYLGHKQTDSIDISSDNEDNSSEEALSVEKMRPASLDKMIALCASLVERSRGADFRLRLSPKDFSAIAGGKGFPFLYQQIKDGINPHQTKHLIHALCRWDERLATQIIGMLFASVTKHTELCAPFFKLLTLLTETQGGPVGLPCFTQLILPRMWDAAEYCPQSVLDWLSLQATKNKIAHAWILQSAEKWLEQFLLAHDNTRVRNAAAFLLVALVPSQPFRANFRAHSQHKLLALNPHSYRDINSDAQAVLHQVITLLLRLLRPARVYADIGAHGTTKLTAYFNLLSYCMVSKTEKLMASSYMRSLWELFHPRLSEPSVPAHHNKHALLTFWHHSLVDCPENAAQVANCPEITRNIAFNYILADHDDAEIVTYNRSMLPAYYGLLRLCCEQSRALTRQLSQHQNLQWAFKNITPHPTQYAAAVDELFKLMALFATRHPDASEQEKLDVTQFRRAVIVSYTSSLDARVSWSTLISALKILVDNEEDRTMVIFNGGIEMCFEALHTLHSMHHEATACHVAGDLFDLLGEMLLLLATLRTRTDSPAQKKQQQQQQQLEQQLQLQQQQMLQKQQQQSQSQTQTPQSPQQKEKQLQQQMQQHLQLQQLQQMQFQQQHFLRQQHQHSALAKALPDAVKRLATLLNTFNSPEISRMALEVLKELVRNPSLETISILAPILINCHLSVANAPNAIGPLGPYFPRRGAKHTPWPLGAKNSPRPPRPMVQMCIALAELTPRGLDADYDVQVESFYRPYHDFIDVMMRMCVNTGTLNDTLVKLQCLVAIESTPLHFTYFPKFWVGIHNNALTHKYVELLVKNQLLVEYLHNVLRDERSMLKDACVREFLELYYHKVAAQLPVARMIYTINYGMHSKDDIDELCGDLFAIRIIAQATGVPASVRKELRGSLRALQNKSERFRKESERDPFPNKKQKRDSQKIKEKEHPQPESEKETSTENDKPSDVSMESSGNAEQATDSTKPPTPAGSDDEQMDKTSVPSSDDETELEDELQPTPKRNKKASNKKTAQDRVNEEREKRLITLITMESYIQSIFAILKRDASVPSSGATKEPSEEPCGEASTSAAAAVKLSRPKGACTPPEPITDVNDTRCNIDTETEAEADEQSPKTSQTNGSQQNESPPAATSADTAPANPSPAPAAAVASTSQAASPTQI</sequence>
<keyword id="KW-0025">Alternative splicing</keyword>
<keyword id="KW-0378">Hydrolase</keyword>
<keyword id="KW-0539">Nucleus</keyword>
<keyword id="KW-0645">Protease</keyword>
<keyword id="KW-1185">Reference proteome</keyword>
<keyword id="KW-0788">Thiol protease</keyword>
<keyword id="KW-0833">Ubl conjugation pathway</keyword>
<accession>Q9VC56</accession>
<accession>Q7KS15</accession>
<proteinExistence type="evidence at protein level"/>
<reference evidence="12" key="1">
    <citation type="journal article" date="2000" name="Science">
        <title>The genome sequence of Drosophila melanogaster.</title>
        <authorList>
            <person name="Adams M.D."/>
            <person name="Celniker S.E."/>
            <person name="Holt R.A."/>
            <person name="Evans C.A."/>
            <person name="Gocayne J.D."/>
            <person name="Amanatides P.G."/>
            <person name="Scherer S.E."/>
            <person name="Li P.W."/>
            <person name="Hoskins R.A."/>
            <person name="Galle R.F."/>
            <person name="George R.A."/>
            <person name="Lewis S.E."/>
            <person name="Richards S."/>
            <person name="Ashburner M."/>
            <person name="Henderson S.N."/>
            <person name="Sutton G.G."/>
            <person name="Wortman J.R."/>
            <person name="Yandell M.D."/>
            <person name="Zhang Q."/>
            <person name="Chen L.X."/>
            <person name="Brandon R.C."/>
            <person name="Rogers Y.-H.C."/>
            <person name="Blazej R.G."/>
            <person name="Champe M."/>
            <person name="Pfeiffer B.D."/>
            <person name="Wan K.H."/>
            <person name="Doyle C."/>
            <person name="Baxter E.G."/>
            <person name="Helt G."/>
            <person name="Nelson C.R."/>
            <person name="Miklos G.L.G."/>
            <person name="Abril J.F."/>
            <person name="Agbayani A."/>
            <person name="An H.-J."/>
            <person name="Andrews-Pfannkoch C."/>
            <person name="Baldwin D."/>
            <person name="Ballew R.M."/>
            <person name="Basu A."/>
            <person name="Baxendale J."/>
            <person name="Bayraktaroglu L."/>
            <person name="Beasley E.M."/>
            <person name="Beeson K.Y."/>
            <person name="Benos P.V."/>
            <person name="Berman B.P."/>
            <person name="Bhandari D."/>
            <person name="Bolshakov S."/>
            <person name="Borkova D."/>
            <person name="Botchan M.R."/>
            <person name="Bouck J."/>
            <person name="Brokstein P."/>
            <person name="Brottier P."/>
            <person name="Burtis K.C."/>
            <person name="Busam D.A."/>
            <person name="Butler H."/>
            <person name="Cadieu E."/>
            <person name="Center A."/>
            <person name="Chandra I."/>
            <person name="Cherry J.M."/>
            <person name="Cawley S."/>
            <person name="Dahlke C."/>
            <person name="Davenport L.B."/>
            <person name="Davies P."/>
            <person name="de Pablos B."/>
            <person name="Delcher A."/>
            <person name="Deng Z."/>
            <person name="Mays A.D."/>
            <person name="Dew I."/>
            <person name="Dietz S.M."/>
            <person name="Dodson K."/>
            <person name="Doup L.E."/>
            <person name="Downes M."/>
            <person name="Dugan-Rocha S."/>
            <person name="Dunkov B.C."/>
            <person name="Dunn P."/>
            <person name="Durbin K.J."/>
            <person name="Evangelista C.C."/>
            <person name="Ferraz C."/>
            <person name="Ferriera S."/>
            <person name="Fleischmann W."/>
            <person name="Fosler C."/>
            <person name="Gabrielian A.E."/>
            <person name="Garg N.S."/>
            <person name="Gelbart W.M."/>
            <person name="Glasser K."/>
            <person name="Glodek A."/>
            <person name="Gong F."/>
            <person name="Gorrell J.H."/>
            <person name="Gu Z."/>
            <person name="Guan P."/>
            <person name="Harris M."/>
            <person name="Harris N.L."/>
            <person name="Harvey D.A."/>
            <person name="Heiman T.J."/>
            <person name="Hernandez J.R."/>
            <person name="Houck J."/>
            <person name="Hostin D."/>
            <person name="Houston K.A."/>
            <person name="Howland T.J."/>
            <person name="Wei M.-H."/>
            <person name="Ibegwam C."/>
            <person name="Jalali M."/>
            <person name="Kalush F."/>
            <person name="Karpen G.H."/>
            <person name="Ke Z."/>
            <person name="Kennison J.A."/>
            <person name="Ketchum K.A."/>
            <person name="Kimmel B.E."/>
            <person name="Kodira C.D."/>
            <person name="Kraft C.L."/>
            <person name="Kravitz S."/>
            <person name="Kulp D."/>
            <person name="Lai Z."/>
            <person name="Lasko P."/>
            <person name="Lei Y."/>
            <person name="Levitsky A.A."/>
            <person name="Li J.H."/>
            <person name="Li Z."/>
            <person name="Liang Y."/>
            <person name="Lin X."/>
            <person name="Liu X."/>
            <person name="Mattei B."/>
            <person name="McIntosh T.C."/>
            <person name="McLeod M.P."/>
            <person name="McPherson D."/>
            <person name="Merkulov G."/>
            <person name="Milshina N.V."/>
            <person name="Mobarry C."/>
            <person name="Morris J."/>
            <person name="Moshrefi A."/>
            <person name="Mount S.M."/>
            <person name="Moy M."/>
            <person name="Murphy B."/>
            <person name="Murphy L."/>
            <person name="Muzny D.M."/>
            <person name="Nelson D.L."/>
            <person name="Nelson D.R."/>
            <person name="Nelson K.A."/>
            <person name="Nixon K."/>
            <person name="Nusskern D.R."/>
            <person name="Pacleb J.M."/>
            <person name="Palazzolo M."/>
            <person name="Pittman G.S."/>
            <person name="Pan S."/>
            <person name="Pollard J."/>
            <person name="Puri V."/>
            <person name="Reese M.G."/>
            <person name="Reinert K."/>
            <person name="Remington K."/>
            <person name="Saunders R.D.C."/>
            <person name="Scheeler F."/>
            <person name="Shen H."/>
            <person name="Shue B.C."/>
            <person name="Siden-Kiamos I."/>
            <person name="Simpson M."/>
            <person name="Skupski M.P."/>
            <person name="Smith T.J."/>
            <person name="Spier E."/>
            <person name="Spradling A.C."/>
            <person name="Stapleton M."/>
            <person name="Strong R."/>
            <person name="Sun E."/>
            <person name="Svirskas R."/>
            <person name="Tector C."/>
            <person name="Turner R."/>
            <person name="Venter E."/>
            <person name="Wang A.H."/>
            <person name="Wang X."/>
            <person name="Wang Z.-Y."/>
            <person name="Wassarman D.A."/>
            <person name="Weinstock G.M."/>
            <person name="Weissenbach J."/>
            <person name="Williams S.M."/>
            <person name="Woodage T."/>
            <person name="Worley K.C."/>
            <person name="Wu D."/>
            <person name="Yang S."/>
            <person name="Yao Q.A."/>
            <person name="Ye J."/>
            <person name="Yeh R.-F."/>
            <person name="Zaveri J.S."/>
            <person name="Zhan M."/>
            <person name="Zhang G."/>
            <person name="Zhao Q."/>
            <person name="Zheng L."/>
            <person name="Zheng X.H."/>
            <person name="Zhong F.N."/>
            <person name="Zhong W."/>
            <person name="Zhou X."/>
            <person name="Zhu S.C."/>
            <person name="Zhu X."/>
            <person name="Smith H.O."/>
            <person name="Gibbs R.A."/>
            <person name="Myers E.W."/>
            <person name="Rubin G.M."/>
            <person name="Venter J.C."/>
        </authorList>
    </citation>
    <scope>NUCLEOTIDE SEQUENCE [LARGE SCALE GENOMIC DNA]</scope>
    <source>
        <strain evidence="12">Berkeley</strain>
    </source>
</reference>
<reference evidence="12" key="2">
    <citation type="journal article" date="2002" name="Genome Biol.">
        <title>Annotation of the Drosophila melanogaster euchromatic genome: a systematic review.</title>
        <authorList>
            <person name="Misra S."/>
            <person name="Crosby M.A."/>
            <person name="Mungall C.J."/>
            <person name="Matthews B.B."/>
            <person name="Campbell K.S."/>
            <person name="Hradecky P."/>
            <person name="Huang Y."/>
            <person name="Kaminker J.S."/>
            <person name="Millburn G.H."/>
            <person name="Prochnik S.E."/>
            <person name="Smith C.D."/>
            <person name="Tupy J.L."/>
            <person name="Whitfield E.J."/>
            <person name="Bayraktaroglu L."/>
            <person name="Berman B.P."/>
            <person name="Bettencourt B.R."/>
            <person name="Celniker S.E."/>
            <person name="de Grey A.D.N.J."/>
            <person name="Drysdale R.A."/>
            <person name="Harris N.L."/>
            <person name="Richter J."/>
            <person name="Russo S."/>
            <person name="Schroeder A.J."/>
            <person name="Shu S.Q."/>
            <person name="Stapleton M."/>
            <person name="Yamada C."/>
            <person name="Ashburner M."/>
            <person name="Gelbart W.M."/>
            <person name="Rubin G.M."/>
            <person name="Lewis S.E."/>
        </authorList>
    </citation>
    <scope>GENOME REANNOTATION</scope>
    <source>
        <strain evidence="12">Berkeley</strain>
    </source>
</reference>
<reference evidence="9" key="3">
    <citation type="journal article" date="2013" name="Development">
        <title>The Drosophila ubiquitin-specific protease Puffyeye regulates dMyc-mediated growth.</title>
        <authorList>
            <person name="Li L."/>
            <person name="Anderson S."/>
            <person name="Secombe J."/>
            <person name="Eisenman R.N."/>
        </authorList>
    </citation>
    <scope>FUNCTION</scope>
    <scope>INTERACTION WITH MYC AND AGO</scope>
    <scope>SUBCELLULAR LOCATION</scope>
    <scope>DISRUPTION PHENOTYPE</scope>
    <scope>MUTAGENESIS OF CYS-2024; HIS-2305 AND ASN-2328</scope>
</reference>
<reference evidence="9" key="4">
    <citation type="journal article" date="2014" name="Cell Commun. Signal.">
        <title>Identifying USPs regulating immune signals in Drosophila: USP2 deubiquitinates Imd and promotes its degradation by interacting with the proteasome.</title>
        <authorList>
            <person name="Engel E."/>
            <person name="Viargues P."/>
            <person name="Mortier M."/>
            <person name="Taillebourg E."/>
            <person name="Coute Y."/>
            <person name="Thevenon D."/>
            <person name="Fauvarque M.O."/>
        </authorList>
    </citation>
    <scope>FUNCTION</scope>
    <scope>DISRUPTION PHENOTYPE</scope>
</reference>
<reference key="5">
    <citation type="journal article" date="2022" name="Sci. Rep.">
        <title>Usp5, Usp34, and Otu1 deubiquitylases mediate DNA repair in Drosophila melanogaster.</title>
        <authorList>
            <person name="Pahi Z.G."/>
            <person name="Kovacs L."/>
            <person name="Szucs D."/>
            <person name="Borsos B.N."/>
            <person name="Deak P."/>
            <person name="Pankotai T."/>
        </authorList>
    </citation>
    <scope>FUNCTION</scope>
    <scope>DISRUPTION PHENOTYPE</scope>
</reference>
<comment type="function">
    <text evidence="4 5 6">Ubiquitin hydrolase that can remove conjugated ubiquitin from target proteins and polyubiquitin chains (PubMed:24173801). Essential for Myc-mediated cell growth and proliferation in developing eyes and wings (PubMed:24173801). In the wing and eye, the deubiquitinating activity acts as an antagonist to the SCF E3 ubiquitin-protein ligase member archipelago (ago) to regulate Myc and CycE stability and thus control cell growth and proliferation (PubMed:24173801). Also appears to regulate ago by modulating its induction by Myc (PubMed:24173801). May also promote cell apoptosis in the wing imaginal disk, acting in an apoptotic pathway that appears to be largely independent of Myc (PubMed:24173801). Required for preventing the activation of the immune deficiency (Imd) and Toll signaling cascades under unchallenged conditions (PubMed:25027767). Also appears to be involved in modulating the differential expression of certain antimicrobial peptides (AMP) in response to infection by either Gram-positive or Gram-negative bacteria (PubMed:25027767). Involved in the regulation of DNA damage repair pathways, including euchromatic site-specific double strand break (DSB) repair (PubMed:35393473).</text>
</comment>
<comment type="catalytic activity">
    <reaction evidence="1">
        <text>Thiol-dependent hydrolysis of ester, thioester, amide, peptide and isopeptide bonds formed by the C-terminal Gly of ubiquitin (a 76-residue protein attached to proteins as an intracellular targeting signal).</text>
        <dbReference type="EC" id="3.4.19.12"/>
    </reaction>
</comment>
<comment type="subunit">
    <text evidence="4">Interacts with Myc and ago.</text>
</comment>
<comment type="subcellular location">
    <subcellularLocation>
        <location evidence="4">Nucleus</location>
    </subcellularLocation>
</comment>
<comment type="alternative products">
    <event type="alternative splicing"/>
    <isoform>
        <id>Q9VC56-1</id>
        <name evidence="11">D</name>
        <name evidence="7">long</name>
        <sequence type="displayed"/>
    </isoform>
    <isoform>
        <id>Q9VC56-2</id>
        <name evidence="11">2</name>
        <name evidence="7">short</name>
        <sequence type="described" ref="VSP_059118 VSP_059119"/>
    </isoform>
</comment>
<comment type="disruption phenotype">
    <text evidence="4 5 6">RNAi-mediated knockdown is pupal lethal (PubMed:24173801). RNAi-mediated knockdown in the dorsal part of the larval wing disk results in adult wings displaying an upward curvature possibly due to cells on the dorsal side being relatively smaller than cells on the ventral side (PubMed:24173801). RNAi-mediated knockdown in the fat body results in the activation of the Imd and Toll signaling pathways under unchallenged conditions, with constitutive expression of Toll (Drs, IM1) and Imd (DptA, Def, Atta) antimicrobial peptides (PubMed:25027767). Flies infected with E.coli display enhanced expression of Atta compared to controls, whereas expression levels of DptA and Def are decreased (PubMed:25027767). Flies infected with M.luteus display increased expression of Drs, IM1 and also Atta 3 hours after infection, whereas 24 hours after infection increased expression is only maintained in Atta and IM1 (PubMed:25027767). Double knockdown with imd prevents the enhanced expression of Atta and DptA in uninfected and infected flies (PubMed:25027767). RNAi-mediated knockdown in third instar larvae results in reduced survival in response to UV radiation (PubMed:35393473).</text>
</comment>
<comment type="miscellaneous">
    <text evidence="7">The name 'Puffyeye' derives from its role in regulating the Myc-dependent rough eye phenotype.</text>
</comment>
<comment type="similarity">
    <text evidence="2">Belongs to the peptidase C19 family.</text>
</comment>
<organism evidence="12">
    <name type="scientific">Drosophila melanogaster</name>
    <name type="common">Fruit fly</name>
    <dbReference type="NCBI Taxonomy" id="7227"/>
    <lineage>
        <taxon>Eukaryota</taxon>
        <taxon>Metazoa</taxon>
        <taxon>Ecdysozoa</taxon>
        <taxon>Arthropoda</taxon>
        <taxon>Hexapoda</taxon>
        <taxon>Insecta</taxon>
        <taxon>Pterygota</taxon>
        <taxon>Neoptera</taxon>
        <taxon>Endopterygota</taxon>
        <taxon>Diptera</taxon>
        <taxon>Brachycera</taxon>
        <taxon>Muscomorpha</taxon>
        <taxon>Ephydroidea</taxon>
        <taxon>Drosophilidae</taxon>
        <taxon>Drosophila</taxon>
        <taxon>Sophophora</taxon>
    </lineage>
</organism>
<protein>
    <recommendedName>
        <fullName evidence="9">Ubiquitin carboxyl-terminal hydrolase puf</fullName>
        <ecNumber evidence="1">3.4.19.12</ecNumber>
    </recommendedName>
    <alternativeName>
        <fullName evidence="7">Protein puffyeye</fullName>
    </alternativeName>
</protein>